<sequence>MTETFAFQAEINQLMSLIINTFYSNKEIFLRDVISNASDACDKIRYQSLTDPSVLGDATRLCVRVVPDKENKTLTVEDNGIGMTKADLVNNLGTIARSGTKAFMEALEAGADMSMIGQFGVGFYSAYLVADRVTVTSKNNSDEVYVWESSAGGTFTITSAPESDMKLPARITLHLKEDQLEYLEARRLKELIKKHSEFIGYDIELMVEKTTEKEVTDEDEEEAKKADEDGEEPKVEEVTEGEEGKKKKTKKVKEVTKEYEVQNKHKPLWTRDPKDVTKEEYAAFYKAISNDWEDPPATKHFSVEGQLEFRAIMFVPKRAPFDMLEPNKKRNNIKLYVRRVFIMDNCEDLCPDWLGFVKGVVDSEDLPLNISRENLQQNKILKVIRKNIVKKCLEMFEEVAENKEDYKQFYEQFGKNIKLGIHEDTANRKKLMELLRFYSTESGEVMTTLKDYVTRMKAEQNSIYYITGDSKKKLESSPFIEQAKRRGFEVLFMTEPYDEYVMQQVKDFEDKKFACLTKEGVHFEESEEEKRQREEEKATCEKLCKTMKEVLGDKVEKVTVSERLSTSPCILVTSEFGWSAHMEQMMRNQALRDSSMAQYMMSKKTMELNPKHPIIKELRRRVEADENDKAVKDLVFLLFDTSLLTSGFQLEDPTYAERINRMIKLGLSLDEEEEEEAVEAAVAETAPAEVTAGTSSMELVD</sequence>
<proteinExistence type="inferred from homology"/>
<name>HSP83_LEIAM</name>
<evidence type="ECO:0000250" key="1"/>
<evidence type="ECO:0000256" key="2">
    <source>
        <dbReference type="SAM" id="MobiDB-lite"/>
    </source>
</evidence>
<evidence type="ECO:0000305" key="3"/>
<organism>
    <name type="scientific">Leishmania amazonensis</name>
    <dbReference type="NCBI Taxonomy" id="5659"/>
    <lineage>
        <taxon>Eukaryota</taxon>
        <taxon>Discoba</taxon>
        <taxon>Euglenozoa</taxon>
        <taxon>Kinetoplastea</taxon>
        <taxon>Metakinetoplastina</taxon>
        <taxon>Trypanosomatida</taxon>
        <taxon>Trypanosomatidae</taxon>
        <taxon>Leishmaniinae</taxon>
        <taxon>Leishmania</taxon>
    </lineage>
</organism>
<comment type="function">
    <text evidence="1">Molecular chaperone that promotes the maturation, structural maintenance and proper regulation of specific target proteins involved for instance in cell cycle control and signal transduction. Undergoes a functional cycle that is linked to its ATPase activity. This cycle probably induces conformational changes in the client proteins, thereby causing their activation. Interacts dynamically with various co-chaperones that modulate its substrate recognition, ATPase cycle and chaperone function (By similarity).</text>
</comment>
<comment type="subunit">
    <text evidence="1">Homodimer.</text>
</comment>
<comment type="subcellular location">
    <subcellularLocation>
        <location>Cytoplasm</location>
    </subcellularLocation>
</comment>
<comment type="domain">
    <text evidence="1">The TPR repeat-binding motif mediates interaction with TPR repeat-containing proteins.</text>
</comment>
<comment type="similarity">
    <text evidence="3">Belongs to the heat shock protein 90 family.</text>
</comment>
<accession>P27741</accession>
<protein>
    <recommendedName>
        <fullName>Heat shock protein 83</fullName>
        <shortName>HSP 83</shortName>
    </recommendedName>
</protein>
<keyword id="KW-0067">ATP-binding</keyword>
<keyword id="KW-0143">Chaperone</keyword>
<keyword id="KW-0963">Cytoplasm</keyword>
<keyword id="KW-0547">Nucleotide-binding</keyword>
<keyword id="KW-0346">Stress response</keyword>
<reference key="1">
    <citation type="journal article" date="1990" name="Mol. Biochem. Parasitol.">
        <title>Sequence analysis and transcriptional activation of heat shock protein 83 of Leishmania mexicana amazonensis.</title>
        <authorList>
            <person name="Shapria M."/>
            <person name="Pedraza G."/>
        </authorList>
    </citation>
    <scope>NUCLEOTIDE SEQUENCE [GENOMIC DNA]</scope>
    <source>
        <strain>MHOM/BR/77/LTB0016/C1S1</strain>
    </source>
</reference>
<gene>
    <name type="primary">HSP83</name>
</gene>
<feature type="chain" id="PRO_0000062939" description="Heat shock protein 83">
    <location>
        <begin position="1"/>
        <end position="701"/>
    </location>
</feature>
<feature type="region of interest" description="Disordered" evidence="2">
    <location>
        <begin position="211"/>
        <end position="248"/>
    </location>
</feature>
<feature type="short sequence motif" description="TPR repeat-binding">
    <location>
        <begin position="697"/>
        <end position="701"/>
    </location>
</feature>
<feature type="compositionally biased region" description="Basic and acidic residues" evidence="2">
    <location>
        <begin position="222"/>
        <end position="245"/>
    </location>
</feature>
<feature type="binding site" evidence="1">
    <location>
        <position position="36"/>
    </location>
    <ligand>
        <name>ATP</name>
        <dbReference type="ChEBI" id="CHEBI:30616"/>
    </ligand>
</feature>
<feature type="binding site" evidence="1">
    <location>
        <position position="78"/>
    </location>
    <ligand>
        <name>ATP</name>
        <dbReference type="ChEBI" id="CHEBI:30616"/>
    </ligand>
</feature>
<feature type="binding site" evidence="1">
    <location>
        <position position="123"/>
    </location>
    <ligand>
        <name>ATP</name>
        <dbReference type="ChEBI" id="CHEBI:30616"/>
    </ligand>
</feature>
<feature type="binding site" evidence="1">
    <location>
        <position position="372"/>
    </location>
    <ligand>
        <name>ATP</name>
        <dbReference type="ChEBI" id="CHEBI:30616"/>
    </ligand>
</feature>
<dbReference type="EMBL" id="M92926">
    <property type="protein sequence ID" value="AAA29250.1"/>
    <property type="molecule type" value="Genomic_DNA"/>
</dbReference>
<dbReference type="PIR" id="A44943">
    <property type="entry name" value="A44943"/>
</dbReference>
<dbReference type="SMR" id="P27741"/>
<dbReference type="VEuPathDB" id="TriTrypDB:LAMA_000120800"/>
<dbReference type="VEuPathDB" id="TriTrypDB:LAMAPH8_000737000"/>
<dbReference type="GO" id="GO:0005737">
    <property type="term" value="C:cytoplasm"/>
    <property type="evidence" value="ECO:0007669"/>
    <property type="project" value="UniProtKB-SubCell"/>
</dbReference>
<dbReference type="GO" id="GO:0005524">
    <property type="term" value="F:ATP binding"/>
    <property type="evidence" value="ECO:0007669"/>
    <property type="project" value="UniProtKB-KW"/>
</dbReference>
<dbReference type="GO" id="GO:0016887">
    <property type="term" value="F:ATP hydrolysis activity"/>
    <property type="evidence" value="ECO:0007669"/>
    <property type="project" value="InterPro"/>
</dbReference>
<dbReference type="GO" id="GO:0140662">
    <property type="term" value="F:ATP-dependent protein folding chaperone"/>
    <property type="evidence" value="ECO:0007669"/>
    <property type="project" value="InterPro"/>
</dbReference>
<dbReference type="GO" id="GO:0051082">
    <property type="term" value="F:unfolded protein binding"/>
    <property type="evidence" value="ECO:0007669"/>
    <property type="project" value="InterPro"/>
</dbReference>
<dbReference type="CDD" id="cd16927">
    <property type="entry name" value="HATPase_Hsp90-like"/>
    <property type="match status" value="1"/>
</dbReference>
<dbReference type="FunFam" id="1.20.120.790:FF:000001">
    <property type="entry name" value="Heat shock protein 90 alpha"/>
    <property type="match status" value="1"/>
</dbReference>
<dbReference type="FunFam" id="3.30.230.80:FF:000001">
    <property type="entry name" value="Heat shock protein 90 alpha"/>
    <property type="match status" value="1"/>
</dbReference>
<dbReference type="FunFam" id="3.40.50.11260:FF:000001">
    <property type="entry name" value="Heat shock protein 90 alpha"/>
    <property type="match status" value="1"/>
</dbReference>
<dbReference type="FunFam" id="3.30.565.10:FF:000001">
    <property type="entry name" value="Heat shock protein HSP 90-alpha"/>
    <property type="match status" value="1"/>
</dbReference>
<dbReference type="Gene3D" id="3.30.230.80">
    <property type="match status" value="1"/>
</dbReference>
<dbReference type="Gene3D" id="3.40.50.11260">
    <property type="match status" value="1"/>
</dbReference>
<dbReference type="Gene3D" id="1.20.120.790">
    <property type="entry name" value="Heat shock protein 90, C-terminal domain"/>
    <property type="match status" value="1"/>
</dbReference>
<dbReference type="Gene3D" id="3.30.565.10">
    <property type="entry name" value="Histidine kinase-like ATPase, C-terminal domain"/>
    <property type="match status" value="1"/>
</dbReference>
<dbReference type="HAMAP" id="MF_00505">
    <property type="entry name" value="HSP90"/>
    <property type="match status" value="1"/>
</dbReference>
<dbReference type="InterPro" id="IPR036890">
    <property type="entry name" value="HATPase_C_sf"/>
</dbReference>
<dbReference type="InterPro" id="IPR019805">
    <property type="entry name" value="Heat_shock_protein_90_CS"/>
</dbReference>
<dbReference type="InterPro" id="IPR037196">
    <property type="entry name" value="HSP90_C"/>
</dbReference>
<dbReference type="InterPro" id="IPR001404">
    <property type="entry name" value="Hsp90_fam"/>
</dbReference>
<dbReference type="InterPro" id="IPR020575">
    <property type="entry name" value="Hsp90_N"/>
</dbReference>
<dbReference type="InterPro" id="IPR020568">
    <property type="entry name" value="Ribosomal_Su5_D2-typ_SF"/>
</dbReference>
<dbReference type="NCBIfam" id="NF003555">
    <property type="entry name" value="PRK05218.1"/>
    <property type="match status" value="1"/>
</dbReference>
<dbReference type="PANTHER" id="PTHR11528">
    <property type="entry name" value="HEAT SHOCK PROTEIN 90 FAMILY MEMBER"/>
    <property type="match status" value="1"/>
</dbReference>
<dbReference type="Pfam" id="PF13589">
    <property type="entry name" value="HATPase_c_3"/>
    <property type="match status" value="1"/>
</dbReference>
<dbReference type="Pfam" id="PF00183">
    <property type="entry name" value="HSP90"/>
    <property type="match status" value="1"/>
</dbReference>
<dbReference type="PIRSF" id="PIRSF002583">
    <property type="entry name" value="Hsp90"/>
    <property type="match status" value="1"/>
</dbReference>
<dbReference type="PRINTS" id="PR00775">
    <property type="entry name" value="HEATSHOCK90"/>
</dbReference>
<dbReference type="SMART" id="SM00387">
    <property type="entry name" value="HATPase_c"/>
    <property type="match status" value="1"/>
</dbReference>
<dbReference type="SUPFAM" id="SSF55874">
    <property type="entry name" value="ATPase domain of HSP90 chaperone/DNA topoisomerase II/histidine kinase"/>
    <property type="match status" value="1"/>
</dbReference>
<dbReference type="SUPFAM" id="SSF110942">
    <property type="entry name" value="HSP90 C-terminal domain"/>
    <property type="match status" value="1"/>
</dbReference>
<dbReference type="SUPFAM" id="SSF54211">
    <property type="entry name" value="Ribosomal protein S5 domain 2-like"/>
    <property type="match status" value="1"/>
</dbReference>
<dbReference type="PROSITE" id="PS00298">
    <property type="entry name" value="HSP90"/>
    <property type="match status" value="1"/>
</dbReference>